<keyword id="KW-0963">Cytoplasm</keyword>
<keyword id="KW-0342">GTP-binding</keyword>
<keyword id="KW-0396">Initiation factor</keyword>
<keyword id="KW-0547">Nucleotide-binding</keyword>
<keyword id="KW-0648">Protein biosynthesis</keyword>
<keyword id="KW-1185">Reference proteome</keyword>
<feature type="chain" id="PRO_1000075625" description="Translation initiation factor IF-2">
    <location>
        <begin position="1"/>
        <end position="953"/>
    </location>
</feature>
<feature type="domain" description="tr-type G">
    <location>
        <begin position="455"/>
        <end position="622"/>
    </location>
</feature>
<feature type="region of interest" description="Disordered" evidence="3">
    <location>
        <begin position="53"/>
        <end position="368"/>
    </location>
</feature>
<feature type="region of interest" description="G1" evidence="1">
    <location>
        <begin position="464"/>
        <end position="471"/>
    </location>
</feature>
<feature type="region of interest" description="G2" evidence="1">
    <location>
        <begin position="489"/>
        <end position="493"/>
    </location>
</feature>
<feature type="region of interest" description="G3" evidence="1">
    <location>
        <begin position="510"/>
        <end position="513"/>
    </location>
</feature>
<feature type="region of interest" description="G4" evidence="1">
    <location>
        <begin position="564"/>
        <end position="567"/>
    </location>
</feature>
<feature type="region of interest" description="G5" evidence="1">
    <location>
        <begin position="600"/>
        <end position="602"/>
    </location>
</feature>
<feature type="compositionally biased region" description="Basic and acidic residues" evidence="3">
    <location>
        <begin position="135"/>
        <end position="151"/>
    </location>
</feature>
<feature type="compositionally biased region" description="Basic and acidic residues" evidence="3">
    <location>
        <begin position="162"/>
        <end position="190"/>
    </location>
</feature>
<feature type="compositionally biased region" description="Low complexity" evidence="3">
    <location>
        <begin position="191"/>
        <end position="214"/>
    </location>
</feature>
<feature type="compositionally biased region" description="Basic and acidic residues" evidence="3">
    <location>
        <begin position="236"/>
        <end position="266"/>
    </location>
</feature>
<feature type="compositionally biased region" description="Low complexity" evidence="3">
    <location>
        <begin position="274"/>
        <end position="288"/>
    </location>
</feature>
<feature type="compositionally biased region" description="Basic and acidic residues" evidence="3">
    <location>
        <begin position="301"/>
        <end position="318"/>
    </location>
</feature>
<feature type="compositionally biased region" description="Low complexity" evidence="3">
    <location>
        <begin position="332"/>
        <end position="341"/>
    </location>
</feature>
<feature type="binding site" evidence="2">
    <location>
        <begin position="464"/>
        <end position="471"/>
    </location>
    <ligand>
        <name>GTP</name>
        <dbReference type="ChEBI" id="CHEBI:37565"/>
    </ligand>
</feature>
<feature type="binding site" evidence="2">
    <location>
        <begin position="510"/>
        <end position="514"/>
    </location>
    <ligand>
        <name>GTP</name>
        <dbReference type="ChEBI" id="CHEBI:37565"/>
    </ligand>
</feature>
<feature type="binding site" evidence="2">
    <location>
        <begin position="564"/>
        <end position="567"/>
    </location>
    <ligand>
        <name>GTP</name>
        <dbReference type="ChEBI" id="CHEBI:37565"/>
    </ligand>
</feature>
<organism>
    <name type="scientific">Streptococcus gordonii (strain Challis / ATCC 35105 / BCRC 15272 / CH1 / DL1 / V288)</name>
    <dbReference type="NCBI Taxonomy" id="467705"/>
    <lineage>
        <taxon>Bacteria</taxon>
        <taxon>Bacillati</taxon>
        <taxon>Bacillota</taxon>
        <taxon>Bacilli</taxon>
        <taxon>Lactobacillales</taxon>
        <taxon>Streptococcaceae</taxon>
        <taxon>Streptococcus</taxon>
    </lineage>
</organism>
<dbReference type="EMBL" id="CP000725">
    <property type="protein sequence ID" value="ABV09252.1"/>
    <property type="molecule type" value="Genomic_DNA"/>
</dbReference>
<dbReference type="RefSeq" id="WP_012000047.1">
    <property type="nucleotide sequence ID" value="NC_009785.1"/>
</dbReference>
<dbReference type="SMR" id="A8AVQ2"/>
<dbReference type="STRING" id="467705.SGO_0546"/>
<dbReference type="KEGG" id="sgo:SGO_0546"/>
<dbReference type="eggNOG" id="COG0532">
    <property type="taxonomic scope" value="Bacteria"/>
</dbReference>
<dbReference type="HOGENOM" id="CLU_006301_5_0_9"/>
<dbReference type="Proteomes" id="UP000001131">
    <property type="component" value="Chromosome"/>
</dbReference>
<dbReference type="GO" id="GO:0005829">
    <property type="term" value="C:cytosol"/>
    <property type="evidence" value="ECO:0007669"/>
    <property type="project" value="TreeGrafter"/>
</dbReference>
<dbReference type="GO" id="GO:0005525">
    <property type="term" value="F:GTP binding"/>
    <property type="evidence" value="ECO:0007669"/>
    <property type="project" value="UniProtKB-KW"/>
</dbReference>
<dbReference type="GO" id="GO:0003924">
    <property type="term" value="F:GTPase activity"/>
    <property type="evidence" value="ECO:0007669"/>
    <property type="project" value="UniProtKB-UniRule"/>
</dbReference>
<dbReference type="GO" id="GO:0003743">
    <property type="term" value="F:translation initiation factor activity"/>
    <property type="evidence" value="ECO:0007669"/>
    <property type="project" value="UniProtKB-UniRule"/>
</dbReference>
<dbReference type="CDD" id="cd01887">
    <property type="entry name" value="IF2_eIF5B"/>
    <property type="match status" value="1"/>
</dbReference>
<dbReference type="CDD" id="cd03702">
    <property type="entry name" value="IF2_mtIF2_II"/>
    <property type="match status" value="1"/>
</dbReference>
<dbReference type="CDD" id="cd03692">
    <property type="entry name" value="mtIF2_IVc"/>
    <property type="match status" value="1"/>
</dbReference>
<dbReference type="FunFam" id="1.10.10.2480:FF:000003">
    <property type="entry name" value="Translation initiation factor IF-2"/>
    <property type="match status" value="1"/>
</dbReference>
<dbReference type="FunFam" id="2.40.30.10:FF:000007">
    <property type="entry name" value="Translation initiation factor IF-2"/>
    <property type="match status" value="1"/>
</dbReference>
<dbReference type="FunFam" id="2.40.30.10:FF:000008">
    <property type="entry name" value="Translation initiation factor IF-2"/>
    <property type="match status" value="1"/>
</dbReference>
<dbReference type="FunFam" id="3.40.50.10050:FF:000001">
    <property type="entry name" value="Translation initiation factor IF-2"/>
    <property type="match status" value="1"/>
</dbReference>
<dbReference type="FunFam" id="3.40.50.300:FF:000019">
    <property type="entry name" value="Translation initiation factor IF-2"/>
    <property type="match status" value="1"/>
</dbReference>
<dbReference type="Gene3D" id="1.10.10.2480">
    <property type="match status" value="1"/>
</dbReference>
<dbReference type="Gene3D" id="3.40.50.300">
    <property type="entry name" value="P-loop containing nucleotide triphosphate hydrolases"/>
    <property type="match status" value="1"/>
</dbReference>
<dbReference type="Gene3D" id="2.40.30.10">
    <property type="entry name" value="Translation factors"/>
    <property type="match status" value="2"/>
</dbReference>
<dbReference type="Gene3D" id="3.40.50.10050">
    <property type="entry name" value="Translation initiation factor IF- 2, domain 3"/>
    <property type="match status" value="1"/>
</dbReference>
<dbReference type="HAMAP" id="MF_00100_B">
    <property type="entry name" value="IF_2_B"/>
    <property type="match status" value="1"/>
</dbReference>
<dbReference type="InterPro" id="IPR053905">
    <property type="entry name" value="EF-G-like_DII"/>
</dbReference>
<dbReference type="InterPro" id="IPR044145">
    <property type="entry name" value="IF2_II"/>
</dbReference>
<dbReference type="InterPro" id="IPR006847">
    <property type="entry name" value="IF2_N"/>
</dbReference>
<dbReference type="InterPro" id="IPR027417">
    <property type="entry name" value="P-loop_NTPase"/>
</dbReference>
<dbReference type="InterPro" id="IPR005225">
    <property type="entry name" value="Small_GTP-bd"/>
</dbReference>
<dbReference type="InterPro" id="IPR000795">
    <property type="entry name" value="T_Tr_GTP-bd_dom"/>
</dbReference>
<dbReference type="InterPro" id="IPR000178">
    <property type="entry name" value="TF_IF2_bacterial-like"/>
</dbReference>
<dbReference type="InterPro" id="IPR015760">
    <property type="entry name" value="TIF_IF2"/>
</dbReference>
<dbReference type="InterPro" id="IPR023115">
    <property type="entry name" value="TIF_IF2_dom3"/>
</dbReference>
<dbReference type="InterPro" id="IPR036925">
    <property type="entry name" value="TIF_IF2_dom3_sf"/>
</dbReference>
<dbReference type="InterPro" id="IPR009000">
    <property type="entry name" value="Transl_B-barrel_sf"/>
</dbReference>
<dbReference type="NCBIfam" id="TIGR00487">
    <property type="entry name" value="IF-2"/>
    <property type="match status" value="1"/>
</dbReference>
<dbReference type="NCBIfam" id="TIGR00231">
    <property type="entry name" value="small_GTP"/>
    <property type="match status" value="1"/>
</dbReference>
<dbReference type="PANTHER" id="PTHR43381:SF5">
    <property type="entry name" value="TR-TYPE G DOMAIN-CONTAINING PROTEIN"/>
    <property type="match status" value="1"/>
</dbReference>
<dbReference type="PANTHER" id="PTHR43381">
    <property type="entry name" value="TRANSLATION INITIATION FACTOR IF-2-RELATED"/>
    <property type="match status" value="1"/>
</dbReference>
<dbReference type="Pfam" id="PF22042">
    <property type="entry name" value="EF-G_D2"/>
    <property type="match status" value="1"/>
</dbReference>
<dbReference type="Pfam" id="PF00009">
    <property type="entry name" value="GTP_EFTU"/>
    <property type="match status" value="1"/>
</dbReference>
<dbReference type="Pfam" id="PF11987">
    <property type="entry name" value="IF-2"/>
    <property type="match status" value="1"/>
</dbReference>
<dbReference type="Pfam" id="PF04760">
    <property type="entry name" value="IF2_N"/>
    <property type="match status" value="2"/>
</dbReference>
<dbReference type="SUPFAM" id="SSF52156">
    <property type="entry name" value="Initiation factor IF2/eIF5b, domain 3"/>
    <property type="match status" value="1"/>
</dbReference>
<dbReference type="SUPFAM" id="SSF52540">
    <property type="entry name" value="P-loop containing nucleoside triphosphate hydrolases"/>
    <property type="match status" value="1"/>
</dbReference>
<dbReference type="SUPFAM" id="SSF50447">
    <property type="entry name" value="Translation proteins"/>
    <property type="match status" value="2"/>
</dbReference>
<dbReference type="PROSITE" id="PS51722">
    <property type="entry name" value="G_TR_2"/>
    <property type="match status" value="1"/>
</dbReference>
<dbReference type="PROSITE" id="PS01176">
    <property type="entry name" value="IF2"/>
    <property type="match status" value="1"/>
</dbReference>
<name>IF2_STRGC</name>
<reference key="1">
    <citation type="journal article" date="2007" name="J. Bacteriol.">
        <title>Genome-wide transcriptional changes in Streptococcus gordonii in response to competence signaling peptide.</title>
        <authorList>
            <person name="Vickerman M.M."/>
            <person name="Iobst S."/>
            <person name="Jesionowski A.M."/>
            <person name="Gill S.R."/>
        </authorList>
    </citation>
    <scope>NUCLEOTIDE SEQUENCE [LARGE SCALE GENOMIC DNA]</scope>
    <source>
        <strain>Challis / ATCC 35105 / BCRC 15272 / CH1 / DL1 / V288</strain>
    </source>
</reference>
<protein>
    <recommendedName>
        <fullName evidence="2">Translation initiation factor IF-2</fullName>
    </recommendedName>
</protein>
<comment type="function">
    <text evidence="2">One of the essential components for the initiation of protein synthesis. Protects formylmethionyl-tRNA from spontaneous hydrolysis and promotes its binding to the 30S ribosomal subunits. Also involved in the hydrolysis of GTP during the formation of the 70S ribosomal complex.</text>
</comment>
<comment type="subcellular location">
    <subcellularLocation>
        <location evidence="2">Cytoplasm</location>
    </subcellularLocation>
</comment>
<comment type="similarity">
    <text evidence="2">Belongs to the TRAFAC class translation factor GTPase superfamily. Classic translation factor GTPase family. IF-2 subfamily.</text>
</comment>
<gene>
    <name evidence="2" type="primary">infB</name>
    <name type="ordered locus">SGO_0546</name>
</gene>
<evidence type="ECO:0000250" key="1"/>
<evidence type="ECO:0000255" key="2">
    <source>
        <dbReference type="HAMAP-Rule" id="MF_00100"/>
    </source>
</evidence>
<evidence type="ECO:0000256" key="3">
    <source>
        <dbReference type="SAM" id="MobiDB-lite"/>
    </source>
</evidence>
<proteinExistence type="inferred from homology"/>
<accession>A8AVQ2</accession>
<sequence length="953" mass="105035">MSKKRLYEIAKELGKESKEIVQRAKELGLDVKSHSSSVEAATADKIVASFASAKKAVAGTSEAKAKPSTEPIKTEATPSKPAKDKTEQATNKPSPSPASSPKPVEEASAKAPASKQEQAQGTAAPKVTRPQSRNFKAEREARAKEQAERRKQQGQQRPQGNRNDRNDRRNNQNDRNDRNSQNRNDRRNRQEQGNQHRNQGQSQYNQQRQSFNQGPKIDFKARAAALKAEQNAEYARSSEERFKQAKANKEALREQNKRKEQAKLEDLFVEVESPKPTAKAPATPAPTAQDPAVDTRRKKQARPDKERDNFDHEEDGPRKQQKNRSSQNQVRNQKNSNWNNNKKTKKGKNNRNNNATPKPVTERKFHELPTEFEYTDGMTVAEIAKRIKREPAEIVKKLFMMGVMATQNQSLDGDTIELLMVDYGIEAKKKVEVDAADIERFFVEEGYINEDALEERPPVVTIMGHVDHGKTTLLDTLRNSRVATGEAGGITQHIGAYQIVEGGKKITFLDTPGHAAFTSMRARGASVTDITILVVAADDGVMPQTIEAINHSKAANVPIIVAINKIDKPGANPERVIGELAEHGVMSTAWGGDSEFVEISAKFNQNIDELLETVLLVAEIQELKADPTVRAIGTVIEARLDKGKGAVATLLVQQGTLNVQDPIVVGNTFGRVRAMTNDLGRRVKVAGPSTPVSITGLNETPMAGDHFAVYEDEKAARAAGEERAKRALLKQRQATHRVSLENLFDTLKAGEVKSVNVIIKADVQGSVEALAASLQKIEVEGVKVTIVHSAVGAINESDVTLAEASNAVIIGFNVRPTPQARQQAESDSVEIRLHSIIYKVIEEVEDAMKGMLDPEYQEKIIGEALIRETFKVSKVGTIGGFMVISGKVTRDSKVRVIRDGVVIYDGQLASLKHFKDDVKEVTNGREGGLMIEGYNDIQVDDTIEAYIMEEIKK</sequence>